<keyword id="KW-0324">Glycolysis</keyword>
<keyword id="KW-0413">Isomerase</keyword>
<keyword id="KW-0464">Manganese</keyword>
<keyword id="KW-0479">Metal-binding</keyword>
<keyword id="KW-1185">Reference proteome</keyword>
<organism>
    <name type="scientific">Aliarcobacter butzleri (strain RM4018)</name>
    <name type="common">Arcobacter butzleri</name>
    <dbReference type="NCBI Taxonomy" id="367737"/>
    <lineage>
        <taxon>Bacteria</taxon>
        <taxon>Pseudomonadati</taxon>
        <taxon>Campylobacterota</taxon>
        <taxon>Epsilonproteobacteria</taxon>
        <taxon>Campylobacterales</taxon>
        <taxon>Arcobacteraceae</taxon>
        <taxon>Aliarcobacter</taxon>
    </lineage>
</organism>
<comment type="function">
    <text evidence="1">Catalyzes the interconversion of 2-phosphoglycerate and 3-phosphoglycerate.</text>
</comment>
<comment type="catalytic activity">
    <reaction evidence="1">
        <text>(2R)-2-phosphoglycerate = (2R)-3-phosphoglycerate</text>
        <dbReference type="Rhea" id="RHEA:15901"/>
        <dbReference type="ChEBI" id="CHEBI:58272"/>
        <dbReference type="ChEBI" id="CHEBI:58289"/>
        <dbReference type="EC" id="5.4.2.12"/>
    </reaction>
</comment>
<comment type="cofactor">
    <cofactor evidence="1">
        <name>Mn(2+)</name>
        <dbReference type="ChEBI" id="CHEBI:29035"/>
    </cofactor>
    <text evidence="1">Binds 2 manganese ions per subunit.</text>
</comment>
<comment type="pathway">
    <text evidence="1">Carbohydrate degradation; glycolysis; pyruvate from D-glyceraldehyde 3-phosphate: step 3/5.</text>
</comment>
<comment type="subunit">
    <text evidence="1">Monomer.</text>
</comment>
<comment type="similarity">
    <text evidence="1">Belongs to the BPG-independent phosphoglycerate mutase family.</text>
</comment>
<reference key="1">
    <citation type="journal article" date="2007" name="PLoS ONE">
        <title>The complete genome sequence and analysis of the Epsilonproteobacterium Arcobacter butzleri.</title>
        <authorList>
            <person name="Miller W.G."/>
            <person name="Parker C.T."/>
            <person name="Rubenfield M."/>
            <person name="Mendz G.L."/>
            <person name="Woesten M.M.S.M."/>
            <person name="Ussery D.W."/>
            <person name="Stolz J.F."/>
            <person name="Binnewies T.T."/>
            <person name="Hallin P.F."/>
            <person name="Wang G."/>
            <person name="Malek J.A."/>
            <person name="Rogosin A."/>
            <person name="Stanker L.H."/>
            <person name="Mandrell R.E."/>
        </authorList>
    </citation>
    <scope>NUCLEOTIDE SEQUENCE [LARGE SCALE GENOMIC DNA]</scope>
    <source>
        <strain>RM4018</strain>
    </source>
</reference>
<proteinExistence type="inferred from homology"/>
<feature type="chain" id="PRO_1000063945" description="2,3-bisphosphoglycerate-independent phosphoglycerate mutase">
    <location>
        <begin position="1"/>
        <end position="491"/>
    </location>
</feature>
<feature type="active site" description="Phosphoserine intermediate" evidence="1">
    <location>
        <position position="61"/>
    </location>
</feature>
<feature type="binding site" evidence="1">
    <location>
        <position position="11"/>
    </location>
    <ligand>
        <name>Mn(2+)</name>
        <dbReference type="ChEBI" id="CHEBI:29035"/>
        <label>2</label>
    </ligand>
</feature>
<feature type="binding site" evidence="1">
    <location>
        <position position="61"/>
    </location>
    <ligand>
        <name>Mn(2+)</name>
        <dbReference type="ChEBI" id="CHEBI:29035"/>
        <label>2</label>
    </ligand>
</feature>
<feature type="binding site" evidence="1">
    <location>
        <position position="118"/>
    </location>
    <ligand>
        <name>substrate</name>
    </ligand>
</feature>
<feature type="binding site" evidence="1">
    <location>
        <begin position="147"/>
        <end position="148"/>
    </location>
    <ligand>
        <name>substrate</name>
    </ligand>
</feature>
<feature type="binding site" evidence="1">
    <location>
        <position position="177"/>
    </location>
    <ligand>
        <name>substrate</name>
    </ligand>
</feature>
<feature type="binding site" evidence="1">
    <location>
        <position position="183"/>
    </location>
    <ligand>
        <name>substrate</name>
    </ligand>
</feature>
<feature type="binding site" evidence="1">
    <location>
        <begin position="248"/>
        <end position="251"/>
    </location>
    <ligand>
        <name>substrate</name>
    </ligand>
</feature>
<feature type="binding site" evidence="1">
    <location>
        <position position="320"/>
    </location>
    <ligand>
        <name>substrate</name>
    </ligand>
</feature>
<feature type="binding site" evidence="1">
    <location>
        <position position="386"/>
    </location>
    <ligand>
        <name>Mn(2+)</name>
        <dbReference type="ChEBI" id="CHEBI:29035"/>
        <label>1</label>
    </ligand>
</feature>
<feature type="binding site" evidence="1">
    <location>
        <position position="390"/>
    </location>
    <ligand>
        <name>Mn(2+)</name>
        <dbReference type="ChEBI" id="CHEBI:29035"/>
        <label>1</label>
    </ligand>
</feature>
<feature type="binding site" evidence="1">
    <location>
        <position position="427"/>
    </location>
    <ligand>
        <name>Mn(2+)</name>
        <dbReference type="ChEBI" id="CHEBI:29035"/>
        <label>2</label>
    </ligand>
</feature>
<feature type="binding site" evidence="1">
    <location>
        <position position="428"/>
    </location>
    <ligand>
        <name>Mn(2+)</name>
        <dbReference type="ChEBI" id="CHEBI:29035"/>
        <label>2</label>
    </ligand>
</feature>
<feature type="binding site" evidence="1">
    <location>
        <position position="445"/>
    </location>
    <ligand>
        <name>Mn(2+)</name>
        <dbReference type="ChEBI" id="CHEBI:29035"/>
        <label>1</label>
    </ligand>
</feature>
<dbReference type="EC" id="5.4.2.12" evidence="1"/>
<dbReference type="EMBL" id="CP000361">
    <property type="protein sequence ID" value="ABV68128.1"/>
    <property type="molecule type" value="Genomic_DNA"/>
</dbReference>
<dbReference type="RefSeq" id="WP_012147824.1">
    <property type="nucleotide sequence ID" value="NC_009850.1"/>
</dbReference>
<dbReference type="SMR" id="A8EW05"/>
<dbReference type="STRING" id="367737.Abu_1900"/>
<dbReference type="GeneID" id="24303727"/>
<dbReference type="KEGG" id="abu:Abu_1900"/>
<dbReference type="eggNOG" id="COG0696">
    <property type="taxonomic scope" value="Bacteria"/>
</dbReference>
<dbReference type="HOGENOM" id="CLU_026099_2_0_7"/>
<dbReference type="UniPathway" id="UPA00109">
    <property type="reaction ID" value="UER00186"/>
</dbReference>
<dbReference type="Proteomes" id="UP000001136">
    <property type="component" value="Chromosome"/>
</dbReference>
<dbReference type="GO" id="GO:0005829">
    <property type="term" value="C:cytosol"/>
    <property type="evidence" value="ECO:0007669"/>
    <property type="project" value="TreeGrafter"/>
</dbReference>
<dbReference type="GO" id="GO:0030145">
    <property type="term" value="F:manganese ion binding"/>
    <property type="evidence" value="ECO:0007669"/>
    <property type="project" value="UniProtKB-UniRule"/>
</dbReference>
<dbReference type="GO" id="GO:0004619">
    <property type="term" value="F:phosphoglycerate mutase activity"/>
    <property type="evidence" value="ECO:0007669"/>
    <property type="project" value="UniProtKB-EC"/>
</dbReference>
<dbReference type="GO" id="GO:0006007">
    <property type="term" value="P:glucose catabolic process"/>
    <property type="evidence" value="ECO:0007669"/>
    <property type="project" value="InterPro"/>
</dbReference>
<dbReference type="GO" id="GO:0006096">
    <property type="term" value="P:glycolytic process"/>
    <property type="evidence" value="ECO:0007669"/>
    <property type="project" value="UniProtKB-UniRule"/>
</dbReference>
<dbReference type="CDD" id="cd16010">
    <property type="entry name" value="iPGM"/>
    <property type="match status" value="1"/>
</dbReference>
<dbReference type="FunFam" id="3.40.1450.10:FF:000002">
    <property type="entry name" value="2,3-bisphosphoglycerate-independent phosphoglycerate mutase"/>
    <property type="match status" value="1"/>
</dbReference>
<dbReference type="Gene3D" id="3.40.720.10">
    <property type="entry name" value="Alkaline Phosphatase, subunit A"/>
    <property type="match status" value="1"/>
</dbReference>
<dbReference type="Gene3D" id="3.40.1450.10">
    <property type="entry name" value="BPG-independent phosphoglycerate mutase, domain B"/>
    <property type="match status" value="1"/>
</dbReference>
<dbReference type="HAMAP" id="MF_01038">
    <property type="entry name" value="GpmI"/>
    <property type="match status" value="1"/>
</dbReference>
<dbReference type="InterPro" id="IPR017850">
    <property type="entry name" value="Alkaline_phosphatase_core_sf"/>
</dbReference>
<dbReference type="InterPro" id="IPR011258">
    <property type="entry name" value="BPG-indep_PGM_N"/>
</dbReference>
<dbReference type="InterPro" id="IPR006124">
    <property type="entry name" value="Metalloenzyme"/>
</dbReference>
<dbReference type="InterPro" id="IPR036646">
    <property type="entry name" value="PGAM_B_sf"/>
</dbReference>
<dbReference type="InterPro" id="IPR005995">
    <property type="entry name" value="Pgm_bpd_ind"/>
</dbReference>
<dbReference type="NCBIfam" id="TIGR01307">
    <property type="entry name" value="pgm_bpd_ind"/>
    <property type="match status" value="1"/>
</dbReference>
<dbReference type="PANTHER" id="PTHR31637">
    <property type="entry name" value="2,3-BISPHOSPHOGLYCERATE-INDEPENDENT PHOSPHOGLYCERATE MUTASE"/>
    <property type="match status" value="1"/>
</dbReference>
<dbReference type="PANTHER" id="PTHR31637:SF0">
    <property type="entry name" value="2,3-BISPHOSPHOGLYCERATE-INDEPENDENT PHOSPHOGLYCERATE MUTASE"/>
    <property type="match status" value="1"/>
</dbReference>
<dbReference type="Pfam" id="PF06415">
    <property type="entry name" value="iPGM_N"/>
    <property type="match status" value="1"/>
</dbReference>
<dbReference type="Pfam" id="PF01676">
    <property type="entry name" value="Metalloenzyme"/>
    <property type="match status" value="1"/>
</dbReference>
<dbReference type="PIRSF" id="PIRSF001492">
    <property type="entry name" value="IPGAM"/>
    <property type="match status" value="1"/>
</dbReference>
<dbReference type="SUPFAM" id="SSF64158">
    <property type="entry name" value="2,3-Bisphosphoglycerate-independent phosphoglycerate mutase, substrate-binding domain"/>
    <property type="match status" value="1"/>
</dbReference>
<dbReference type="SUPFAM" id="SSF53649">
    <property type="entry name" value="Alkaline phosphatase-like"/>
    <property type="match status" value="1"/>
</dbReference>
<protein>
    <recommendedName>
        <fullName evidence="1">2,3-bisphosphoglycerate-independent phosphoglycerate mutase</fullName>
        <shortName evidence="1">BPG-independent PGAM</shortName>
        <shortName evidence="1">Phosphoglyceromutase</shortName>
        <shortName evidence="1">iPGM</shortName>
        <ecNumber evidence="1">5.4.2.12</ecNumber>
    </recommendedName>
</protein>
<gene>
    <name evidence="1" type="primary">gpmI</name>
    <name type="ordered locus">Abu_1900</name>
</gene>
<sequence>MSNKTLLIITDGIGHNSSNKNNAFYTAKKPTYDYLFENVPYSLIHTYGEYVGLPDMQMGNSEVGHMTIGSGRVLYQDLVKIHLAIKNDTLKDNEVLKNTISKSNNIHLLGLASDGGVHSHINHIIAMAKIAKNMGKKVFIHIITDGRDVAPNCAKTYINQILEICDEDIKIATISGRYYAMDRDNRWDRVKKAYDSITFANPKTQDDILSYIETSYKNEIFDEFIEPTSFEGYNGIEKNDGIIFCNFRSDRMREISSVFAKADFNEFDTFKGSLNFASMTQYDKNVFIPVLFPKDNPKNTLAEVISNAGLSQLHTAETEKYAHVTFFFNGGVEEPVLNESRVLIPSPQVATYDLKPEMSAPEVGSAVRTAMNNNIDFIVVNFANGDMVGHTGVFEAAVKAVEAVDFELGQIFELAKKQNYNIILTSDHGNCEMMKDDEGNILTNHTVGDVYCFVYSPKVKEVKTGSLNNIAPTVLKLMNLEIPKEMDEPLI</sequence>
<evidence type="ECO:0000255" key="1">
    <source>
        <dbReference type="HAMAP-Rule" id="MF_01038"/>
    </source>
</evidence>
<accession>A8EW05</accession>
<name>GPMI_ALIB4</name>